<accession>B4ULC0</accession>
<name>RS18_ANASK</name>
<protein>
    <recommendedName>
        <fullName evidence="1">Small ribosomal subunit protein bS18</fullName>
    </recommendedName>
    <alternativeName>
        <fullName evidence="3">30S ribosomal protein S18</fullName>
    </alternativeName>
</protein>
<sequence length="135" mass="14029">MARPDMGGPKTGGFGGPRSGGFGGGGGGGGGFGGGGFGGGRGGDRGDRGDRDDRGGDEGGGRRGFGRRKVCRFCADKALKVDYKDQGQMKYFLTERGKIIPRRISGNCAKHQREVATAIKRGRMLAILPYTVGQM</sequence>
<reference key="1">
    <citation type="submission" date="2008-08" db="EMBL/GenBank/DDBJ databases">
        <title>Complete sequence of Anaeromyxobacter sp. K.</title>
        <authorList>
            <consortium name="US DOE Joint Genome Institute"/>
            <person name="Lucas S."/>
            <person name="Copeland A."/>
            <person name="Lapidus A."/>
            <person name="Glavina del Rio T."/>
            <person name="Dalin E."/>
            <person name="Tice H."/>
            <person name="Bruce D."/>
            <person name="Goodwin L."/>
            <person name="Pitluck S."/>
            <person name="Saunders E."/>
            <person name="Brettin T."/>
            <person name="Detter J.C."/>
            <person name="Han C."/>
            <person name="Larimer F."/>
            <person name="Land M."/>
            <person name="Hauser L."/>
            <person name="Kyrpides N."/>
            <person name="Ovchinnikiva G."/>
            <person name="Beliaev A."/>
        </authorList>
    </citation>
    <scope>NUCLEOTIDE SEQUENCE [LARGE SCALE GENOMIC DNA]</scope>
    <source>
        <strain>K</strain>
    </source>
</reference>
<gene>
    <name evidence="1" type="primary">rpsR</name>
    <name type="ordered locus">AnaeK_0124</name>
</gene>
<evidence type="ECO:0000255" key="1">
    <source>
        <dbReference type="HAMAP-Rule" id="MF_00270"/>
    </source>
</evidence>
<evidence type="ECO:0000256" key="2">
    <source>
        <dbReference type="SAM" id="MobiDB-lite"/>
    </source>
</evidence>
<evidence type="ECO:0000305" key="3"/>
<organism>
    <name type="scientific">Anaeromyxobacter sp. (strain K)</name>
    <dbReference type="NCBI Taxonomy" id="447217"/>
    <lineage>
        <taxon>Bacteria</taxon>
        <taxon>Pseudomonadati</taxon>
        <taxon>Myxococcota</taxon>
        <taxon>Myxococcia</taxon>
        <taxon>Myxococcales</taxon>
        <taxon>Cystobacterineae</taxon>
        <taxon>Anaeromyxobacteraceae</taxon>
        <taxon>Anaeromyxobacter</taxon>
    </lineage>
</organism>
<comment type="function">
    <text evidence="1">Binds as a heterodimer with protein bS6 to the central domain of the 16S rRNA, where it helps stabilize the platform of the 30S subunit.</text>
</comment>
<comment type="subunit">
    <text evidence="1">Part of the 30S ribosomal subunit. Forms a tight heterodimer with protein bS6.</text>
</comment>
<comment type="similarity">
    <text evidence="1">Belongs to the bacterial ribosomal protein bS18 family.</text>
</comment>
<keyword id="KW-0687">Ribonucleoprotein</keyword>
<keyword id="KW-0689">Ribosomal protein</keyword>
<keyword id="KW-0694">RNA-binding</keyword>
<keyword id="KW-0699">rRNA-binding</keyword>
<proteinExistence type="inferred from homology"/>
<feature type="chain" id="PRO_1000114396" description="Small ribosomal subunit protein bS18">
    <location>
        <begin position="1"/>
        <end position="135"/>
    </location>
</feature>
<feature type="region of interest" description="Disordered" evidence="2">
    <location>
        <begin position="1"/>
        <end position="65"/>
    </location>
</feature>
<feature type="compositionally biased region" description="Gly residues" evidence="2">
    <location>
        <begin position="9"/>
        <end position="41"/>
    </location>
</feature>
<feature type="compositionally biased region" description="Basic and acidic residues" evidence="2">
    <location>
        <begin position="42"/>
        <end position="61"/>
    </location>
</feature>
<dbReference type="EMBL" id="CP001131">
    <property type="protein sequence ID" value="ACG71367.1"/>
    <property type="molecule type" value="Genomic_DNA"/>
</dbReference>
<dbReference type="RefSeq" id="WP_012524203.1">
    <property type="nucleotide sequence ID" value="NC_011145.1"/>
</dbReference>
<dbReference type="SMR" id="B4ULC0"/>
<dbReference type="KEGG" id="ank:AnaeK_0124"/>
<dbReference type="HOGENOM" id="CLU_148710_0_2_7"/>
<dbReference type="OrthoDB" id="9812008at2"/>
<dbReference type="Proteomes" id="UP000001871">
    <property type="component" value="Chromosome"/>
</dbReference>
<dbReference type="GO" id="GO:0022627">
    <property type="term" value="C:cytosolic small ribosomal subunit"/>
    <property type="evidence" value="ECO:0007669"/>
    <property type="project" value="TreeGrafter"/>
</dbReference>
<dbReference type="GO" id="GO:0070181">
    <property type="term" value="F:small ribosomal subunit rRNA binding"/>
    <property type="evidence" value="ECO:0007669"/>
    <property type="project" value="TreeGrafter"/>
</dbReference>
<dbReference type="GO" id="GO:0003735">
    <property type="term" value="F:structural constituent of ribosome"/>
    <property type="evidence" value="ECO:0007669"/>
    <property type="project" value="InterPro"/>
</dbReference>
<dbReference type="GO" id="GO:0006412">
    <property type="term" value="P:translation"/>
    <property type="evidence" value="ECO:0007669"/>
    <property type="project" value="UniProtKB-UniRule"/>
</dbReference>
<dbReference type="Gene3D" id="4.10.640.10">
    <property type="entry name" value="Ribosomal protein S18"/>
    <property type="match status" value="1"/>
</dbReference>
<dbReference type="HAMAP" id="MF_00270">
    <property type="entry name" value="Ribosomal_bS18"/>
    <property type="match status" value="1"/>
</dbReference>
<dbReference type="InterPro" id="IPR001648">
    <property type="entry name" value="Ribosomal_bS18"/>
</dbReference>
<dbReference type="InterPro" id="IPR036870">
    <property type="entry name" value="Ribosomal_bS18_sf"/>
</dbReference>
<dbReference type="NCBIfam" id="TIGR00165">
    <property type="entry name" value="S18"/>
    <property type="match status" value="1"/>
</dbReference>
<dbReference type="PANTHER" id="PTHR13479">
    <property type="entry name" value="30S RIBOSOMAL PROTEIN S18"/>
    <property type="match status" value="1"/>
</dbReference>
<dbReference type="PANTHER" id="PTHR13479:SF40">
    <property type="entry name" value="SMALL RIBOSOMAL SUBUNIT PROTEIN BS18M"/>
    <property type="match status" value="1"/>
</dbReference>
<dbReference type="Pfam" id="PF01084">
    <property type="entry name" value="Ribosomal_S18"/>
    <property type="match status" value="1"/>
</dbReference>
<dbReference type="PRINTS" id="PR00974">
    <property type="entry name" value="RIBOSOMALS18"/>
</dbReference>
<dbReference type="SUPFAM" id="SSF46911">
    <property type="entry name" value="Ribosomal protein S18"/>
    <property type="match status" value="1"/>
</dbReference>